<protein>
    <recommendedName>
        <fullName evidence="5">Nonribosomal peptide synthetase 8</fullName>
        <ecNumber evidence="3">6.3.2.-</ecNumber>
    </recommendedName>
    <alternativeName>
        <fullName evidence="5">Fumonisin biosynthesis cluster protein 14</fullName>
    </alternativeName>
</protein>
<reference key="1">
    <citation type="journal article" date="2003" name="Fungal Genet. Biol.">
        <title>Co-expression of 15 contiguous genes delineates a fumonisin biosynthetic gene cluster in Gibberella moniliformis.</title>
        <authorList>
            <person name="Proctor R.H."/>
            <person name="Brown D.W."/>
            <person name="Plattner R.D."/>
            <person name="Desjardins A.E."/>
        </authorList>
    </citation>
    <scope>NUCLEOTIDE SEQUENCE [GENOMIC DNA]</scope>
    <scope>PATHWAY</scope>
    <source>
        <strain>M3125 / FGSC 7600</strain>
    </source>
</reference>
<reference key="2">
    <citation type="journal article" date="2010" name="Nature">
        <title>Comparative genomics reveals mobile pathogenicity chromosomes in Fusarium.</title>
        <authorList>
            <person name="Ma L.-J."/>
            <person name="van der Does H.C."/>
            <person name="Borkovich K.A."/>
            <person name="Coleman J.J."/>
            <person name="Daboussi M.-J."/>
            <person name="Di Pietro A."/>
            <person name="Dufresne M."/>
            <person name="Freitag M."/>
            <person name="Grabherr M."/>
            <person name="Henrissat B."/>
            <person name="Houterman P.M."/>
            <person name="Kang S."/>
            <person name="Shim W.-B."/>
            <person name="Woloshuk C."/>
            <person name="Xie X."/>
            <person name="Xu J.-R."/>
            <person name="Antoniw J."/>
            <person name="Baker S.E."/>
            <person name="Bluhm B.H."/>
            <person name="Breakspear A."/>
            <person name="Brown D.W."/>
            <person name="Butchko R.A.E."/>
            <person name="Chapman S."/>
            <person name="Coulson R."/>
            <person name="Coutinho P.M."/>
            <person name="Danchin E.G.J."/>
            <person name="Diener A."/>
            <person name="Gale L.R."/>
            <person name="Gardiner D.M."/>
            <person name="Goff S."/>
            <person name="Hammond-Kosack K.E."/>
            <person name="Hilburn K."/>
            <person name="Hua-Van A."/>
            <person name="Jonkers W."/>
            <person name="Kazan K."/>
            <person name="Kodira C.D."/>
            <person name="Koehrsen M."/>
            <person name="Kumar L."/>
            <person name="Lee Y.-H."/>
            <person name="Li L."/>
            <person name="Manners J.M."/>
            <person name="Miranda-Saavedra D."/>
            <person name="Mukherjee M."/>
            <person name="Park G."/>
            <person name="Park J."/>
            <person name="Park S.-Y."/>
            <person name="Proctor R.H."/>
            <person name="Regev A."/>
            <person name="Ruiz-Roldan M.C."/>
            <person name="Sain D."/>
            <person name="Sakthikumar S."/>
            <person name="Sykes S."/>
            <person name="Schwartz D.C."/>
            <person name="Turgeon B.G."/>
            <person name="Wapinski I."/>
            <person name="Yoder O."/>
            <person name="Young S."/>
            <person name="Zeng Q."/>
            <person name="Zhou S."/>
            <person name="Galagan J."/>
            <person name="Cuomo C.A."/>
            <person name="Kistler H.C."/>
            <person name="Rep M."/>
        </authorList>
    </citation>
    <scope>NUCLEOTIDE SEQUENCE [LARGE SCALE GENOMIC DNA]</scope>
    <source>
        <strain>M3125 / FGSC 7600</strain>
    </source>
</reference>
<reference key="3">
    <citation type="journal article" date="2006" name="Biochemistry">
        <title>A bidomain nonribosomal peptide synthetase encoded by FUM14 catalyzes the formation of tricarballylic esters in the biosynthesis of fumonisins.</title>
        <authorList>
            <person name="Zaleta-Rivera K."/>
            <person name="Xu C."/>
            <person name="Yu F."/>
            <person name="Butchko R.A."/>
            <person name="Proctor R.H."/>
            <person name="Hidalgo-Lara M.E."/>
            <person name="Raza A."/>
            <person name="Dussault P.H."/>
            <person name="Du L."/>
        </authorList>
    </citation>
    <scope>FUNCTION</scope>
    <scope>DISRUPTION PHENOTYPE</scope>
    <scope>CATALYTIC ACTIVITY</scope>
    <scope>DOMAIN</scope>
    <scope>PATHWAY</scope>
</reference>
<reference key="4">
    <citation type="journal article" date="2006" name="J. Agric. Food Chem.">
        <title>Deletion analysis of FUM genes involved in tricarballylic ester formation during fumonisin biosynthesis.</title>
        <authorList>
            <person name="Butchko R.A."/>
            <person name="Plattner R.D."/>
            <person name="Proctor R.H."/>
        </authorList>
    </citation>
    <scope>FUNCTION</scope>
    <scope>DISRUPTION PHENOTYPE</scope>
    <scope>PATHWAY</scope>
</reference>
<organism>
    <name type="scientific">Gibberella moniliformis (strain M3125 / FGSC 7600)</name>
    <name type="common">Maize ear and stalk rot fungus</name>
    <name type="synonym">Fusarium verticillioides</name>
    <dbReference type="NCBI Taxonomy" id="334819"/>
    <lineage>
        <taxon>Eukaryota</taxon>
        <taxon>Fungi</taxon>
        <taxon>Dikarya</taxon>
        <taxon>Ascomycota</taxon>
        <taxon>Pezizomycotina</taxon>
        <taxon>Sordariomycetes</taxon>
        <taxon>Hypocreomycetidae</taxon>
        <taxon>Hypocreales</taxon>
        <taxon>Nectriaceae</taxon>
        <taxon>Fusarium</taxon>
        <taxon>Fusarium fujikuroi species complex</taxon>
    </lineage>
</organism>
<keyword id="KW-0436">Ligase</keyword>
<keyword id="KW-0596">Phosphopantetheine</keyword>
<keyword id="KW-0597">Phosphoprotein</keyword>
<keyword id="KW-1185">Reference proteome</keyword>
<gene>
    <name evidence="5" type="primary">FUM14</name>
    <name type="ORF">FVEG_00325</name>
</gene>
<evidence type="ECO:0000255" key="1">
    <source>
        <dbReference type="PROSITE-ProRule" id="PRU00258"/>
    </source>
</evidence>
<evidence type="ECO:0000269" key="2">
    <source>
    </source>
</evidence>
<evidence type="ECO:0000269" key="3">
    <source>
    </source>
</evidence>
<evidence type="ECO:0000269" key="4">
    <source>
    </source>
</evidence>
<evidence type="ECO:0000303" key="5">
    <source>
    </source>
</evidence>
<evidence type="ECO:0000305" key="6"/>
<evidence type="ECO:0000305" key="7">
    <source>
    </source>
</evidence>
<sequence>MNSLDQWRDTWAKVLSIQPSEIDDQDSFFDLGGDSVKAIQLLSEAAQSAINVDLQTFYDNFWNIISPQLRGENRSGPIDRGGSIATGEADDSIGLLKTDVNLEVVEKALSKVNIARESVCRMAPISSIQEFFLYLGLNGHVGLINYVYQVEGRDLKQGLARLVKHLEAKNPIFRTVMIEDDTGKFTQVQLSHSISTWTYPTDLQAYLDETMTGRQRLGASPVRYSLVLKDERHKGQNFFVISLDHTHCDAFSRYLIDKEILQILKQPTEYASLQNPERPWYGDFVKHNRAHILDEQLSRYWASYMQGATLANVHPLSEAVVGGELDGEMVEIVPIPVVSQSRGTRGQTNPSHVILAAWAMALSKHSGLKDITFGLARHGRSSDSFTDLRRVMGPLVTGTPFRVTLNDTQERTEQLLNRVKEEVLKTARWEQGMVPNIHPDAEGNPWVQSMVNLKSELYGFGNESWTGDEAEADITAIKMRRDLQQYEFKSNWAILLSTLQKQGQLRLRMYYQSQLLSHDKAQALFASFKSLIAELAAADGSLVTGLLD</sequence>
<proteinExistence type="evidence at protein level"/>
<feature type="chain" id="PRO_0000441155" description="Nonribosomal peptide synthetase 8">
    <location>
        <begin position="1"/>
        <end position="548"/>
    </location>
</feature>
<feature type="domain" description="Carrier" evidence="1">
    <location>
        <begin position="1"/>
        <end position="77"/>
    </location>
</feature>
<feature type="region of interest" description="Condensation">
    <location>
        <begin position="122"/>
        <end position="537"/>
    </location>
</feature>
<feature type="modified residue" description="O-(pantetheine 4'-phosphoryl)serine" evidence="1">
    <location>
        <position position="35"/>
    </location>
</feature>
<accession>Q8J2Q6</accession>
<accession>W7LKY1</accession>
<comment type="function">
    <text evidence="2 3 4 7">Nonribosomal peptide synthetase; part of the gene cluster that mediates the biosynthesis of fumonisins B1 (FB1), B2 (FB2), B3 (FB3), and B4 (FB4), which are carcinogenic mycotoxins (PubMed:12620260, PubMed:16489749, PubMed:17147424). Within the pathway FUM14 catalyzes esterification of CoA-activated tricarballylic acid to the C-14 and C-15 hydroxyls of the fumonisin backbone (PubMed:16489749, PubMed:17147424). The biosynthesis starts with the FUM1-catalyzed carbon chain assembly from one molecule of acetyl-CoA, eight molecules of malonyl-CoA, and two molecules of methionine (in S-adenosyl form). The C18 polyketide chain is released from the enzyme by a nucleophilic attack of a carbanion, which is derived from R-carbon of alanine by decarboxylation, on the carbonyl carbon of polyketide acyl chain. This step is catalyzed by the pyridoxal 5'-phosphate-dependent aminoacyl transferase FUM8. The resultant 3-keto intermediate is then stereospecifically reduced to a 3-hydroxyl product by reductase FUM13. Subsequent oxidations at C-10 by the cytochrome P450 monooxygenase FUM2, C-14 and C-15 by FUM6, FUM12 or FUM15, tricarballylic esterification of the hydroxyl groups on C-14 and C-15 by acyltransferase FUM14, and C-5 hydroxylation by 2-keto-glutarate-dependent dioxygenase FUM3 furnish the biosynthesis of fumonisins. The tricarballylic moieties are most likely derived from the citric acid cycle, and their addition to the carbon backbone may involve FUM7, FUM10, FUM11 and FUM14 (Probable).</text>
</comment>
<comment type="pathway">
    <text evidence="2 3 4">Mycotoxin biosynthesis.</text>
</comment>
<comment type="domain">
    <text evidence="3">FUM14 encodes a nonribosomal peptide synthetasecontaining two domains, a peptidyl carrier protein domain and a condensation domain (PubMed:16489749). The condensation domain catalyzes a C-O bond (ester) formation and can convert HFB1, a precursor of fumonisin B1 lacking the tricarballylic ester, to fumonisin B1 (PubMed:16489749).</text>
</comment>
<comment type="disruption phenotype">
    <text evidence="3 4">Loses the ability to produce fumonisins, but accumulates two new metabolites, HFB3 and HFB4, which are biosynthetic precursors of fumonisins lacking the tricarballylic esters (PubMed:16489749, PubMed:17147424).</text>
</comment>
<comment type="similarity">
    <text evidence="6">Belongs to the NRP synthetase family.</text>
</comment>
<comment type="sequence caution" evidence="6">
    <conflict type="erroneous gene model prediction">
        <sequence resource="EMBL-CDS" id="EWG36205"/>
    </conflict>
</comment>
<dbReference type="EC" id="6.3.2.-" evidence="3"/>
<dbReference type="EMBL" id="AF155773">
    <property type="protein sequence ID" value="AAN74817.2"/>
    <property type="molecule type" value="Genomic_DNA"/>
</dbReference>
<dbReference type="EMBL" id="CM000578">
    <property type="protein sequence ID" value="EWG36205.1"/>
    <property type="status" value="ALT_SEQ"/>
    <property type="molecule type" value="Genomic_DNA"/>
</dbReference>
<dbReference type="RefSeq" id="XP_018742396.1">
    <property type="nucleotide sequence ID" value="XM_018886762.1"/>
</dbReference>
<dbReference type="SMR" id="Q8J2Q6"/>
<dbReference type="STRING" id="334819.Q8J2Q6"/>
<dbReference type="GeneID" id="30058702"/>
<dbReference type="KEGG" id="fvr:FVEG_00325"/>
<dbReference type="eggNOG" id="KOG1178">
    <property type="taxonomic scope" value="Eukaryota"/>
</dbReference>
<dbReference type="OrthoDB" id="28343at110618"/>
<dbReference type="Proteomes" id="UP000009096">
    <property type="component" value="Chromosome 1"/>
</dbReference>
<dbReference type="GO" id="GO:0005737">
    <property type="term" value="C:cytoplasm"/>
    <property type="evidence" value="ECO:0007669"/>
    <property type="project" value="TreeGrafter"/>
</dbReference>
<dbReference type="GO" id="GO:0016874">
    <property type="term" value="F:ligase activity"/>
    <property type="evidence" value="ECO:0007669"/>
    <property type="project" value="UniProtKB-KW"/>
</dbReference>
<dbReference type="GO" id="GO:0031177">
    <property type="term" value="F:phosphopantetheine binding"/>
    <property type="evidence" value="ECO:0007669"/>
    <property type="project" value="TreeGrafter"/>
</dbReference>
<dbReference type="GO" id="GO:0043041">
    <property type="term" value="P:amino acid activation for nonribosomal peptide biosynthetic process"/>
    <property type="evidence" value="ECO:0007669"/>
    <property type="project" value="TreeGrafter"/>
</dbReference>
<dbReference type="GO" id="GO:1900541">
    <property type="term" value="P:fumonisin biosynthetic process"/>
    <property type="evidence" value="ECO:0000314"/>
    <property type="project" value="GO_Central"/>
</dbReference>
<dbReference type="CDD" id="cd19536">
    <property type="entry name" value="DCL_NRPS-like"/>
    <property type="match status" value="1"/>
</dbReference>
<dbReference type="Gene3D" id="1.10.1200.10">
    <property type="entry name" value="ACP-like"/>
    <property type="match status" value="1"/>
</dbReference>
<dbReference type="Gene3D" id="3.30.559.10">
    <property type="entry name" value="Chloramphenicol acetyltransferase-like domain"/>
    <property type="match status" value="1"/>
</dbReference>
<dbReference type="Gene3D" id="3.30.559.30">
    <property type="entry name" value="Nonribosomal peptide synthetase, condensation domain"/>
    <property type="match status" value="1"/>
</dbReference>
<dbReference type="InterPro" id="IPR036736">
    <property type="entry name" value="ACP-like_sf"/>
</dbReference>
<dbReference type="InterPro" id="IPR023213">
    <property type="entry name" value="CAT-like_dom_sf"/>
</dbReference>
<dbReference type="InterPro" id="IPR001242">
    <property type="entry name" value="Condensatn"/>
</dbReference>
<dbReference type="InterPro" id="IPR009081">
    <property type="entry name" value="PP-bd_ACP"/>
</dbReference>
<dbReference type="InterPro" id="IPR006162">
    <property type="entry name" value="Ppantetheine_attach_site"/>
</dbReference>
<dbReference type="PANTHER" id="PTHR45527:SF1">
    <property type="entry name" value="FATTY ACID SYNTHASE"/>
    <property type="match status" value="1"/>
</dbReference>
<dbReference type="PANTHER" id="PTHR45527">
    <property type="entry name" value="NONRIBOSOMAL PEPTIDE SYNTHETASE"/>
    <property type="match status" value="1"/>
</dbReference>
<dbReference type="Pfam" id="PF00668">
    <property type="entry name" value="Condensation"/>
    <property type="match status" value="1"/>
</dbReference>
<dbReference type="Pfam" id="PF00550">
    <property type="entry name" value="PP-binding"/>
    <property type="match status" value="1"/>
</dbReference>
<dbReference type="SUPFAM" id="SSF47336">
    <property type="entry name" value="ACP-like"/>
    <property type="match status" value="1"/>
</dbReference>
<dbReference type="SUPFAM" id="SSF52777">
    <property type="entry name" value="CoA-dependent acyltransferases"/>
    <property type="match status" value="2"/>
</dbReference>
<dbReference type="PROSITE" id="PS50075">
    <property type="entry name" value="CARRIER"/>
    <property type="match status" value="1"/>
</dbReference>
<dbReference type="PROSITE" id="PS00012">
    <property type="entry name" value="PHOSPHOPANTETHEINE"/>
    <property type="match status" value="1"/>
</dbReference>
<name>FUM14_GIBM7</name>